<protein>
    <recommendedName>
        <fullName>Adenylosuccinate lyase</fullName>
        <shortName>ASL</shortName>
        <ecNumber evidence="2">4.3.2.2</ecNumber>
    </recommendedName>
    <alternativeName>
        <fullName>Adenylosuccinase</fullName>
        <shortName>ASase</shortName>
    </alternativeName>
</protein>
<dbReference type="EC" id="4.3.2.2" evidence="2"/>
<dbReference type="EMBL" id="AP008934">
    <property type="protein sequence ID" value="BAE18027.1"/>
    <property type="molecule type" value="Genomic_DNA"/>
</dbReference>
<dbReference type="RefSeq" id="WP_011302760.1">
    <property type="nucleotide sequence ID" value="NC_007350.1"/>
</dbReference>
<dbReference type="SMR" id="Q49YV3"/>
<dbReference type="GeneID" id="3617078"/>
<dbReference type="KEGG" id="ssp:SSP0882"/>
<dbReference type="PATRIC" id="fig|342451.11.peg.881"/>
<dbReference type="eggNOG" id="COG0015">
    <property type="taxonomic scope" value="Bacteria"/>
</dbReference>
<dbReference type="HOGENOM" id="CLU_030949_0_1_9"/>
<dbReference type="OrthoDB" id="9768878at2"/>
<dbReference type="UniPathway" id="UPA00074">
    <property type="reaction ID" value="UER00132"/>
</dbReference>
<dbReference type="UniPathway" id="UPA00075">
    <property type="reaction ID" value="UER00336"/>
</dbReference>
<dbReference type="Proteomes" id="UP000006371">
    <property type="component" value="Chromosome"/>
</dbReference>
<dbReference type="GO" id="GO:0005829">
    <property type="term" value="C:cytosol"/>
    <property type="evidence" value="ECO:0007669"/>
    <property type="project" value="TreeGrafter"/>
</dbReference>
<dbReference type="GO" id="GO:0070626">
    <property type="term" value="F:(S)-2-(5-amino-1-(5-phospho-D-ribosyl)imidazole-4-carboxamido) succinate lyase (fumarate-forming) activity"/>
    <property type="evidence" value="ECO:0007669"/>
    <property type="project" value="TreeGrafter"/>
</dbReference>
<dbReference type="GO" id="GO:0004018">
    <property type="term" value="F:N6-(1,2-dicarboxyethyl)AMP AMP-lyase (fumarate-forming) activity"/>
    <property type="evidence" value="ECO:0007669"/>
    <property type="project" value="InterPro"/>
</dbReference>
<dbReference type="GO" id="GO:0044208">
    <property type="term" value="P:'de novo' AMP biosynthetic process"/>
    <property type="evidence" value="ECO:0007669"/>
    <property type="project" value="UniProtKB-UniPathway"/>
</dbReference>
<dbReference type="GO" id="GO:0006189">
    <property type="term" value="P:'de novo' IMP biosynthetic process"/>
    <property type="evidence" value="ECO:0007669"/>
    <property type="project" value="UniProtKB-UniPathway"/>
</dbReference>
<dbReference type="CDD" id="cd01360">
    <property type="entry name" value="Adenylsuccinate_lyase_1"/>
    <property type="match status" value="1"/>
</dbReference>
<dbReference type="FunFam" id="1.10.275.10:FF:000006">
    <property type="entry name" value="Adenylosuccinate lyase"/>
    <property type="match status" value="1"/>
</dbReference>
<dbReference type="FunFam" id="1.10.40.30:FF:000007">
    <property type="entry name" value="Adenylosuccinate lyase"/>
    <property type="match status" value="1"/>
</dbReference>
<dbReference type="FunFam" id="1.20.200.10:FF:000008">
    <property type="entry name" value="Adenylosuccinate lyase"/>
    <property type="match status" value="1"/>
</dbReference>
<dbReference type="Gene3D" id="1.10.40.30">
    <property type="entry name" value="Fumarase/aspartase (C-terminal domain)"/>
    <property type="match status" value="1"/>
</dbReference>
<dbReference type="Gene3D" id="1.20.200.10">
    <property type="entry name" value="Fumarase/aspartase (Central domain)"/>
    <property type="match status" value="1"/>
</dbReference>
<dbReference type="Gene3D" id="1.10.275.10">
    <property type="entry name" value="Fumarase/aspartase (N-terminal domain)"/>
    <property type="match status" value="1"/>
</dbReference>
<dbReference type="InterPro" id="IPR019468">
    <property type="entry name" value="AdenyloSucc_lyase_C"/>
</dbReference>
<dbReference type="InterPro" id="IPR024083">
    <property type="entry name" value="Fumarase/histidase_N"/>
</dbReference>
<dbReference type="InterPro" id="IPR020557">
    <property type="entry name" value="Fumarate_lyase_CS"/>
</dbReference>
<dbReference type="InterPro" id="IPR000362">
    <property type="entry name" value="Fumarate_lyase_fam"/>
</dbReference>
<dbReference type="InterPro" id="IPR022761">
    <property type="entry name" value="Fumarate_lyase_N"/>
</dbReference>
<dbReference type="InterPro" id="IPR008948">
    <property type="entry name" value="L-Aspartase-like"/>
</dbReference>
<dbReference type="InterPro" id="IPR004769">
    <property type="entry name" value="Pur_lyase"/>
</dbReference>
<dbReference type="NCBIfam" id="TIGR00928">
    <property type="entry name" value="purB"/>
    <property type="match status" value="1"/>
</dbReference>
<dbReference type="PANTHER" id="PTHR43172">
    <property type="entry name" value="ADENYLOSUCCINATE LYASE"/>
    <property type="match status" value="1"/>
</dbReference>
<dbReference type="PANTHER" id="PTHR43172:SF1">
    <property type="entry name" value="ADENYLOSUCCINATE LYASE"/>
    <property type="match status" value="1"/>
</dbReference>
<dbReference type="Pfam" id="PF10397">
    <property type="entry name" value="ADSL_C"/>
    <property type="match status" value="1"/>
</dbReference>
<dbReference type="Pfam" id="PF00206">
    <property type="entry name" value="Lyase_1"/>
    <property type="match status" value="1"/>
</dbReference>
<dbReference type="PRINTS" id="PR00145">
    <property type="entry name" value="ARGSUCLYASE"/>
</dbReference>
<dbReference type="PRINTS" id="PR00149">
    <property type="entry name" value="FUMRATELYASE"/>
</dbReference>
<dbReference type="SMART" id="SM00998">
    <property type="entry name" value="ADSL_C"/>
    <property type="match status" value="1"/>
</dbReference>
<dbReference type="SUPFAM" id="SSF48557">
    <property type="entry name" value="L-aspartase-like"/>
    <property type="match status" value="1"/>
</dbReference>
<dbReference type="PROSITE" id="PS00163">
    <property type="entry name" value="FUMARATE_LYASES"/>
    <property type="match status" value="1"/>
</dbReference>
<accession>Q49YV3</accession>
<comment type="function">
    <text evidence="2">Catalyzes two reactions in de novo purine nucleotide biosynthesis. Catalyzes the breakdown of 5-aminoimidazole- (N-succinylocarboxamide) ribotide (SAICAR or 2-[5-amino-1-(5-phospho-beta-D-ribosyl)imidazole-4-carboxamido]succinate) to 5-aminoimidazole-4-carboxamide ribotide (AICAR or 5-amino-1-(5-phospho-beta-D-ribosyl)imidazole-4-carboxamide) and fumarate, and of adenylosuccinate (ADS or N(6)-(1,2-dicarboxyethyl)-AMP) to adenosine monophosphate (AMP) and fumarate.</text>
</comment>
<comment type="catalytic activity">
    <reaction evidence="2">
        <text>N(6)-(1,2-dicarboxyethyl)-AMP = fumarate + AMP</text>
        <dbReference type="Rhea" id="RHEA:16853"/>
        <dbReference type="ChEBI" id="CHEBI:29806"/>
        <dbReference type="ChEBI" id="CHEBI:57567"/>
        <dbReference type="ChEBI" id="CHEBI:456215"/>
        <dbReference type="EC" id="4.3.2.2"/>
    </reaction>
    <physiologicalReaction direction="left-to-right" evidence="2">
        <dbReference type="Rhea" id="RHEA:16854"/>
    </physiologicalReaction>
</comment>
<comment type="catalytic activity">
    <reaction evidence="2">
        <text>(2S)-2-[5-amino-1-(5-phospho-beta-D-ribosyl)imidazole-4-carboxamido]succinate = 5-amino-1-(5-phospho-beta-D-ribosyl)imidazole-4-carboxamide + fumarate</text>
        <dbReference type="Rhea" id="RHEA:23920"/>
        <dbReference type="ChEBI" id="CHEBI:29806"/>
        <dbReference type="ChEBI" id="CHEBI:58443"/>
        <dbReference type="ChEBI" id="CHEBI:58475"/>
        <dbReference type="EC" id="4.3.2.2"/>
    </reaction>
    <physiologicalReaction direction="left-to-right" evidence="2">
        <dbReference type="Rhea" id="RHEA:23921"/>
    </physiologicalReaction>
</comment>
<comment type="pathway">
    <text>Purine metabolism; AMP biosynthesis via de novo pathway; AMP from IMP: step 2/2.</text>
</comment>
<comment type="pathway">
    <text>Purine metabolism; IMP biosynthesis via de novo pathway; 5-amino-1-(5-phospho-D-ribosyl)imidazole-4-carboxamide from 5-amino-1-(5-phospho-D-ribosyl)imidazole-4-carboxylate: step 2/2.</text>
</comment>
<comment type="subunit">
    <text evidence="1">Homodimer and homotetramer. Residues from neighboring subunits contribute catalytic and substrate-binding residues to each active site (By similarity).</text>
</comment>
<comment type="similarity">
    <text evidence="3">Belongs to the lyase 1 family. Adenylosuccinate lyase subfamily.</text>
</comment>
<name>PUR8_STAS1</name>
<organism>
    <name type="scientific">Staphylococcus saprophyticus subsp. saprophyticus (strain ATCC 15305 / DSM 20229 / NCIMB 8711 / NCTC 7292 / S-41)</name>
    <dbReference type="NCBI Taxonomy" id="342451"/>
    <lineage>
        <taxon>Bacteria</taxon>
        <taxon>Bacillati</taxon>
        <taxon>Bacillota</taxon>
        <taxon>Bacilli</taxon>
        <taxon>Bacillales</taxon>
        <taxon>Staphylococcaceae</taxon>
        <taxon>Staphylococcus</taxon>
    </lineage>
</organism>
<sequence>MIERYSREEMSNIWTDQNRYEAWLEVEILACEAWSKLGDIPAEDVKKIRENAKVDVARAQEIEQETRHDVVAFTRQVSETLGEERKWVHYGLTSTDVVDTALSYVIKQANEIIKKDLERFIDVLAQKAKDYKYTLMMGRTHGVHAEPTTFGVKMALWYTEMKRNLERFKQVRKEIEVGKMSGAVGTFANIPPEIEAYVCEHLGLDAAPVSTQTLQRDRHAYYVATLALISTSMEKFAVEIRNLQKTETREVEEAFAKGQKGSSAMPHKRNPIGSENITGIARVIRGYVTTAYENVPLWHERDISHSSAERIMLPDVTIALDYGLNRFTNIVERLTVFEDNMLANIDKTFGLIYSQRVLLALINKGLAREAAYDKVQPKAMESWETKTPFRTLIEEDATITDLLTKEDLDECFNPKHHLNQVDTIFQRAGLE</sequence>
<proteinExistence type="inferred from homology"/>
<reference key="1">
    <citation type="journal article" date="2005" name="Proc. Natl. Acad. Sci. U.S.A.">
        <title>Whole genome sequence of Staphylococcus saprophyticus reveals the pathogenesis of uncomplicated urinary tract infection.</title>
        <authorList>
            <person name="Kuroda M."/>
            <person name="Yamashita A."/>
            <person name="Hirakawa H."/>
            <person name="Kumano M."/>
            <person name="Morikawa K."/>
            <person name="Higashide M."/>
            <person name="Maruyama A."/>
            <person name="Inose Y."/>
            <person name="Matoba K."/>
            <person name="Toh H."/>
            <person name="Kuhara S."/>
            <person name="Hattori M."/>
            <person name="Ohta T."/>
        </authorList>
    </citation>
    <scope>NUCLEOTIDE SEQUENCE [LARGE SCALE GENOMIC DNA]</scope>
    <source>
        <strain>ATCC 15305 / DSM 20229 / NCIMB 8711 / NCTC 7292 / S-41</strain>
    </source>
</reference>
<gene>
    <name type="primary">purB</name>
    <name type="ordered locus">SSP0882</name>
</gene>
<keyword id="KW-0456">Lyase</keyword>
<keyword id="KW-0658">Purine biosynthesis</keyword>
<keyword id="KW-1185">Reference proteome</keyword>
<feature type="chain" id="PRO_0000259985" description="Adenylosuccinate lyase">
    <location>
        <begin position="1"/>
        <end position="431"/>
    </location>
</feature>
<feature type="active site" description="Proton donor/acceptor" evidence="2">
    <location>
        <position position="141"/>
    </location>
</feature>
<feature type="active site" description="Proton donor/acceptor" evidence="2">
    <location>
        <position position="262"/>
    </location>
</feature>
<feature type="binding site" evidence="2">
    <location>
        <begin position="4"/>
        <end position="5"/>
    </location>
    <ligand>
        <name>N(6)-(1,2-dicarboxyethyl)-AMP</name>
        <dbReference type="ChEBI" id="CHEBI:57567"/>
    </ligand>
</feature>
<feature type="binding site" evidence="2">
    <location>
        <begin position="67"/>
        <end position="69"/>
    </location>
    <ligand>
        <name>N(6)-(1,2-dicarboxyethyl)-AMP</name>
        <dbReference type="ChEBI" id="CHEBI:57567"/>
    </ligand>
</feature>
<feature type="binding site" evidence="2">
    <location>
        <begin position="93"/>
        <end position="94"/>
    </location>
    <ligand>
        <name>N(6)-(1,2-dicarboxyethyl)-AMP</name>
        <dbReference type="ChEBI" id="CHEBI:57567"/>
    </ligand>
</feature>
<feature type="binding site" evidence="2">
    <location>
        <position position="212"/>
    </location>
    <ligand>
        <name>N(6)-(1,2-dicarboxyethyl)-AMP</name>
        <dbReference type="ChEBI" id="CHEBI:57567"/>
    </ligand>
</feature>
<feature type="binding site" evidence="2">
    <location>
        <position position="263"/>
    </location>
    <ligand>
        <name>N(6)-(1,2-dicarboxyethyl)-AMP</name>
        <dbReference type="ChEBI" id="CHEBI:57567"/>
    </ligand>
</feature>
<feature type="binding site" evidence="2">
    <location>
        <begin position="268"/>
        <end position="270"/>
    </location>
    <ligand>
        <name>N(6)-(1,2-dicarboxyethyl)-AMP</name>
        <dbReference type="ChEBI" id="CHEBI:57567"/>
    </ligand>
</feature>
<feature type="binding site" evidence="2">
    <location>
        <position position="276"/>
    </location>
    <ligand>
        <name>N(6)-(1,2-dicarboxyethyl)-AMP</name>
        <dbReference type="ChEBI" id="CHEBI:57567"/>
    </ligand>
</feature>
<feature type="binding site" evidence="2">
    <location>
        <begin position="307"/>
        <end position="311"/>
    </location>
    <ligand>
        <name>N(6)-(1,2-dicarboxyethyl)-AMP</name>
        <dbReference type="ChEBI" id="CHEBI:57567"/>
    </ligand>
</feature>
<evidence type="ECO:0000250" key="1"/>
<evidence type="ECO:0000250" key="2">
    <source>
        <dbReference type="UniProtKB" id="P0AB89"/>
    </source>
</evidence>
<evidence type="ECO:0000305" key="3"/>